<reference key="1">
    <citation type="journal article" date="2005" name="J. Bacteriol.">
        <title>Insights on evolution of virulence and resistance from the complete genome analysis of an early methicillin-resistant Staphylococcus aureus strain and a biofilm-producing methicillin-resistant Staphylococcus epidermidis strain.</title>
        <authorList>
            <person name="Gill S.R."/>
            <person name="Fouts D.E."/>
            <person name="Archer G.L."/>
            <person name="Mongodin E.F."/>
            <person name="DeBoy R.T."/>
            <person name="Ravel J."/>
            <person name="Paulsen I.T."/>
            <person name="Kolonay J.F."/>
            <person name="Brinkac L.M."/>
            <person name="Beanan M.J."/>
            <person name="Dodson R.J."/>
            <person name="Daugherty S.C."/>
            <person name="Madupu R."/>
            <person name="Angiuoli S.V."/>
            <person name="Durkin A.S."/>
            <person name="Haft D.H."/>
            <person name="Vamathevan J.J."/>
            <person name="Khouri H."/>
            <person name="Utterback T.R."/>
            <person name="Lee C."/>
            <person name="Dimitrov G."/>
            <person name="Jiang L."/>
            <person name="Qin H."/>
            <person name="Weidman J."/>
            <person name="Tran K."/>
            <person name="Kang K.H."/>
            <person name="Hance I.R."/>
            <person name="Nelson K.E."/>
            <person name="Fraser C.M."/>
        </authorList>
    </citation>
    <scope>NUCLEOTIDE SEQUENCE [LARGE SCALE GENOMIC DNA]</scope>
    <source>
        <strain>COL</strain>
    </source>
</reference>
<proteinExistence type="inferred from homology"/>
<dbReference type="EC" id="1.10.3.-"/>
<dbReference type="EMBL" id="CP000046">
    <property type="protein sequence ID" value="AAW36531.1"/>
    <property type="status" value="ALT_INIT"/>
    <property type="molecule type" value="Genomic_DNA"/>
</dbReference>
<dbReference type="SMR" id="Q5HH26"/>
<dbReference type="KEGG" id="sac:SACOL1067"/>
<dbReference type="HOGENOM" id="CLU_140945_2_0_9"/>
<dbReference type="Proteomes" id="UP000000530">
    <property type="component" value="Chromosome"/>
</dbReference>
<dbReference type="GO" id="GO:0009319">
    <property type="term" value="C:cytochrome o ubiquinol oxidase complex"/>
    <property type="evidence" value="ECO:0007669"/>
    <property type="project" value="TreeGrafter"/>
</dbReference>
<dbReference type="GO" id="GO:0005886">
    <property type="term" value="C:plasma membrane"/>
    <property type="evidence" value="ECO:0007669"/>
    <property type="project" value="UniProtKB-SubCell"/>
</dbReference>
<dbReference type="GO" id="GO:0009486">
    <property type="term" value="F:cytochrome bo3 ubiquinol oxidase activity"/>
    <property type="evidence" value="ECO:0007669"/>
    <property type="project" value="TreeGrafter"/>
</dbReference>
<dbReference type="GO" id="GO:0016682">
    <property type="term" value="F:oxidoreductase activity, acting on diphenols and related substances as donors, oxygen as acceptor"/>
    <property type="evidence" value="ECO:0007669"/>
    <property type="project" value="InterPro"/>
</dbReference>
<dbReference type="GO" id="GO:0015078">
    <property type="term" value="F:proton transmembrane transporter activity"/>
    <property type="evidence" value="ECO:0007669"/>
    <property type="project" value="TreeGrafter"/>
</dbReference>
<dbReference type="GO" id="GO:0019646">
    <property type="term" value="P:aerobic electron transport chain"/>
    <property type="evidence" value="ECO:0007669"/>
    <property type="project" value="TreeGrafter"/>
</dbReference>
<dbReference type="GO" id="GO:0042773">
    <property type="term" value="P:ATP synthesis coupled electron transport"/>
    <property type="evidence" value="ECO:0007669"/>
    <property type="project" value="InterPro"/>
</dbReference>
<dbReference type="GO" id="GO:0015990">
    <property type="term" value="P:electron transport coupled proton transport"/>
    <property type="evidence" value="ECO:0007669"/>
    <property type="project" value="TreeGrafter"/>
</dbReference>
<dbReference type="InterPro" id="IPR005171">
    <property type="entry name" value="Cyt_c_oxidase_su4_prok"/>
</dbReference>
<dbReference type="InterPro" id="IPR050968">
    <property type="entry name" value="Cytochrome_c_oxidase_bac_sub4"/>
</dbReference>
<dbReference type="InterPro" id="IPR014250">
    <property type="entry name" value="QoxD"/>
</dbReference>
<dbReference type="NCBIfam" id="TIGR02901">
    <property type="entry name" value="QoxD"/>
    <property type="match status" value="1"/>
</dbReference>
<dbReference type="PANTHER" id="PTHR36835">
    <property type="entry name" value="CYTOCHROME BO(3) UBIQUINOL OXIDASE SUBUNIT 4"/>
    <property type="match status" value="1"/>
</dbReference>
<dbReference type="PANTHER" id="PTHR36835:SF1">
    <property type="entry name" value="CYTOCHROME BO(3) UBIQUINOL OXIDASE SUBUNIT 4"/>
    <property type="match status" value="1"/>
</dbReference>
<dbReference type="Pfam" id="PF03626">
    <property type="entry name" value="COX4_pro"/>
    <property type="match status" value="1"/>
</dbReference>
<keyword id="KW-1003">Cell membrane</keyword>
<keyword id="KW-0472">Membrane</keyword>
<keyword id="KW-0560">Oxidoreductase</keyword>
<keyword id="KW-0812">Transmembrane</keyword>
<keyword id="KW-1133">Transmembrane helix</keyword>
<evidence type="ECO:0000250" key="1"/>
<evidence type="ECO:0000255" key="2"/>
<evidence type="ECO:0000305" key="3"/>
<organism>
    <name type="scientific">Staphylococcus aureus (strain COL)</name>
    <dbReference type="NCBI Taxonomy" id="93062"/>
    <lineage>
        <taxon>Bacteria</taxon>
        <taxon>Bacillati</taxon>
        <taxon>Bacillota</taxon>
        <taxon>Bacilli</taxon>
        <taxon>Bacillales</taxon>
        <taxon>Staphylococcaceae</taxon>
        <taxon>Staphylococcus</taxon>
    </lineage>
</organism>
<gene>
    <name type="primary">qoxD</name>
    <name type="ordered locus">SACOL1067</name>
</gene>
<accession>Q5HH26</accession>
<feature type="chain" id="PRO_0000275858" description="Probable quinol oxidase subunit 4">
    <location>
        <begin position="1"/>
        <end position="96"/>
    </location>
</feature>
<feature type="transmembrane region" description="Helical" evidence="2">
    <location>
        <begin position="8"/>
        <end position="28"/>
    </location>
</feature>
<feature type="transmembrane region" description="Helical" evidence="2">
    <location>
        <begin position="36"/>
        <end position="56"/>
    </location>
</feature>
<feature type="transmembrane region" description="Helical" evidence="2">
    <location>
        <begin position="68"/>
        <end position="88"/>
    </location>
</feature>
<name>QOX4_STAAC</name>
<comment type="function">
    <text evidence="1">Catalyzes quinol oxidation with the concomitant reduction of oxygen to water.</text>
</comment>
<comment type="catalytic activity">
    <reaction>
        <text>2 a quinol + O2 = 2 a quinone + 2 H2O</text>
        <dbReference type="Rhea" id="RHEA:55376"/>
        <dbReference type="ChEBI" id="CHEBI:15377"/>
        <dbReference type="ChEBI" id="CHEBI:15379"/>
        <dbReference type="ChEBI" id="CHEBI:24646"/>
        <dbReference type="ChEBI" id="CHEBI:132124"/>
    </reaction>
</comment>
<comment type="subcellular location">
    <subcellularLocation>
        <location evidence="1">Cell membrane</location>
        <topology evidence="1">Multi-pass membrane protein</topology>
    </subcellularLocation>
</comment>
<comment type="similarity">
    <text evidence="3">Belongs to the cytochrome c oxidase bacterial subunit 4 family.</text>
</comment>
<comment type="sequence caution" evidence="3">
    <conflict type="erroneous initiation">
        <sequence resource="EMBL-CDS" id="AAW36531"/>
    </conflict>
</comment>
<protein>
    <recommendedName>
        <fullName>Probable quinol oxidase subunit 4</fullName>
        <ecNumber>1.10.3.-</ecNumber>
    </recommendedName>
    <alternativeName>
        <fullName>Quinol oxidase polypeptide IV</fullName>
    </alternativeName>
</protein>
<sequence>MSTIMKHTVGFIASIVLTLLAVYVTLYTSLTFHAKLTIIFGFAFVQAGLQLLMFMHLTEGKDGRLQTFKVIFALVITLCFVVGTYWVMQGGHSSHL</sequence>